<gene>
    <name type="primary">Actrt1</name>
</gene>
<sequence>MLNTARLDNPAVIFDNGSGLCKVGISGEIVPRHVINSVVGHPKFNIPSARSNRKRYFVGEEAQCMYDGLYLHYPIERGLVTRWDDMEKLWKDLFEWELGVKPNEQPVFMTEPSLNPRETREKTTEIMFEKFNVPALYLCNHAVGALCASACITGLVLDSGDGVTCTVPIYEGYSLPRAITKLYVAGRDITEHLTRLLLAKGYTFPCILNKAVVDDIKEKLCTVSWGSKDSEKCYQRSLSEYKLPDGNTIQMSDHLCQVPEVLFTPEHLGIHDLGISKMVCNSIMKCDTDIQENLFAEIVLSGGTTLFPGLQDRLLKELEVLAFEGTPIKITASPDRCYSAWIGGSVMTSLTTFKQMWVTAEDFKEYGAFVVQRKCF</sequence>
<feature type="chain" id="PRO_0000255659" description="Actin-related protein T1">
    <location>
        <begin position="1"/>
        <end position="376"/>
    </location>
</feature>
<organism>
    <name type="scientific">Rattus norvegicus</name>
    <name type="common">Rat</name>
    <dbReference type="NCBI Taxonomy" id="10116"/>
    <lineage>
        <taxon>Eukaryota</taxon>
        <taxon>Metazoa</taxon>
        <taxon>Chordata</taxon>
        <taxon>Craniata</taxon>
        <taxon>Vertebrata</taxon>
        <taxon>Euteleostomi</taxon>
        <taxon>Mammalia</taxon>
        <taxon>Eutheria</taxon>
        <taxon>Euarchontoglires</taxon>
        <taxon>Glires</taxon>
        <taxon>Rodentia</taxon>
        <taxon>Myomorpha</taxon>
        <taxon>Muroidea</taxon>
        <taxon>Muridae</taxon>
        <taxon>Murinae</taxon>
        <taxon>Rattus</taxon>
    </lineage>
</organism>
<accession>Q5XIK1</accession>
<comment type="function">
    <text evidence="1">Negatively regulates the Hedgehog (SHH) signaling. Binds to the promoter of the SHH signaling mediator, GLI1, and inhibits its expression.</text>
</comment>
<comment type="subcellular location">
    <subcellularLocation>
        <location evidence="1">Cytoplasm</location>
        <location evidence="1">Cytoskeleton</location>
    </subcellularLocation>
    <subcellularLocation>
        <location evidence="1">Cytoplasm</location>
    </subcellularLocation>
    <subcellularLocation>
        <location evidence="1">Nucleus</location>
    </subcellularLocation>
    <subcellularLocation>
        <location evidence="1">Cytoplasmic vesicle</location>
        <location evidence="1">Secretory vesicle</location>
        <location evidence="1">Acrosome</location>
    </subcellularLocation>
    <text evidence="1">Both detected in the nucleus and cytoplasm, localizes to the nucleus where it binds chromatin upon stimulation of the Hedgehog pathway.</text>
</comment>
<comment type="similarity">
    <text evidence="2">Belongs to the actin family.</text>
</comment>
<reference key="1">
    <citation type="journal article" date="2004" name="Genome Res.">
        <title>The status, quality, and expansion of the NIH full-length cDNA project: the Mammalian Gene Collection (MGC).</title>
        <authorList>
            <consortium name="The MGC Project Team"/>
        </authorList>
    </citation>
    <scope>NUCLEOTIDE SEQUENCE [LARGE SCALE MRNA]</scope>
    <source>
        <tissue>Testis</tissue>
    </source>
</reference>
<protein>
    <recommendedName>
        <fullName>Actin-related protein T1</fullName>
    </recommendedName>
</protein>
<name>ACTT1_RAT</name>
<proteinExistence type="evidence at transcript level"/>
<dbReference type="EMBL" id="BC083679">
    <property type="protein sequence ID" value="AAH83679.1"/>
    <property type="molecule type" value="mRNA"/>
</dbReference>
<dbReference type="RefSeq" id="NP_001013983.1">
    <property type="nucleotide sequence ID" value="NM_001013961.1"/>
</dbReference>
<dbReference type="SMR" id="Q5XIK1"/>
<dbReference type="FunCoup" id="Q5XIK1">
    <property type="interactions" value="11"/>
</dbReference>
<dbReference type="STRING" id="10116.ENSRNOP00000053759"/>
<dbReference type="PhosphoSitePlus" id="Q5XIK1"/>
<dbReference type="PaxDb" id="10116-ENSRNOP00000053759"/>
<dbReference type="Ensembl" id="ENSRNOT00000004591.6">
    <property type="protein sequence ID" value="ENSRNOP00000053759.1"/>
    <property type="gene ID" value="ENSRNOG00000003456.6"/>
</dbReference>
<dbReference type="GeneID" id="302796"/>
<dbReference type="KEGG" id="rno:302796"/>
<dbReference type="UCSC" id="RGD:1359559">
    <property type="organism name" value="rat"/>
</dbReference>
<dbReference type="AGR" id="RGD:1359559"/>
<dbReference type="CTD" id="139741"/>
<dbReference type="RGD" id="1359559">
    <property type="gene designation" value="Actrt1"/>
</dbReference>
<dbReference type="eggNOG" id="KOG0676">
    <property type="taxonomic scope" value="Eukaryota"/>
</dbReference>
<dbReference type="GeneTree" id="ENSGT00940000162451"/>
<dbReference type="HOGENOM" id="CLU_027965_0_2_1"/>
<dbReference type="InParanoid" id="Q5XIK1"/>
<dbReference type="OMA" id="RWFSAWI"/>
<dbReference type="OrthoDB" id="10053773at2759"/>
<dbReference type="PhylomeDB" id="Q5XIK1"/>
<dbReference type="TreeFam" id="TF354237"/>
<dbReference type="PRO" id="PR:Q5XIK1"/>
<dbReference type="Proteomes" id="UP000002494">
    <property type="component" value="Chromosome X"/>
</dbReference>
<dbReference type="Bgee" id="ENSRNOG00000003456">
    <property type="expression patterns" value="Expressed in testis"/>
</dbReference>
<dbReference type="GO" id="GO:0001669">
    <property type="term" value="C:acrosomal vesicle"/>
    <property type="evidence" value="ECO:0000250"/>
    <property type="project" value="UniProtKB"/>
</dbReference>
<dbReference type="GO" id="GO:0015629">
    <property type="term" value="C:actin cytoskeleton"/>
    <property type="evidence" value="ECO:0000318"/>
    <property type="project" value="GO_Central"/>
</dbReference>
<dbReference type="GO" id="GO:0005737">
    <property type="term" value="C:cytoplasm"/>
    <property type="evidence" value="ECO:0000250"/>
    <property type="project" value="UniProtKB"/>
</dbReference>
<dbReference type="GO" id="GO:0005634">
    <property type="term" value="C:nucleus"/>
    <property type="evidence" value="ECO:0000250"/>
    <property type="project" value="UniProtKB"/>
</dbReference>
<dbReference type="GO" id="GO:0003682">
    <property type="term" value="F:chromatin binding"/>
    <property type="evidence" value="ECO:0000250"/>
    <property type="project" value="UniProtKB"/>
</dbReference>
<dbReference type="GO" id="GO:0045892">
    <property type="term" value="P:negative regulation of DNA-templated transcription"/>
    <property type="evidence" value="ECO:0000250"/>
    <property type="project" value="UniProtKB"/>
</dbReference>
<dbReference type="GO" id="GO:0006355">
    <property type="term" value="P:regulation of DNA-templated transcription"/>
    <property type="evidence" value="ECO:0000318"/>
    <property type="project" value="GO_Central"/>
</dbReference>
<dbReference type="GO" id="GO:0008589">
    <property type="term" value="P:regulation of smoothened signaling pathway"/>
    <property type="evidence" value="ECO:0000250"/>
    <property type="project" value="UniProtKB"/>
</dbReference>
<dbReference type="CDD" id="cd13397">
    <property type="entry name" value="ASKHA_NBD_actin_Arp-T1-3"/>
    <property type="match status" value="1"/>
</dbReference>
<dbReference type="FunFam" id="3.90.640.10:FF:000007">
    <property type="entry name" value="Actin like 7B"/>
    <property type="match status" value="1"/>
</dbReference>
<dbReference type="FunFam" id="3.30.420.40:FF:000018">
    <property type="entry name" value="Actin-like protein (Centractin)"/>
    <property type="match status" value="1"/>
</dbReference>
<dbReference type="Gene3D" id="3.30.420.40">
    <property type="match status" value="2"/>
</dbReference>
<dbReference type="Gene3D" id="3.90.640.10">
    <property type="entry name" value="Actin, Chain A, domain 4"/>
    <property type="match status" value="1"/>
</dbReference>
<dbReference type="InterPro" id="IPR004000">
    <property type="entry name" value="Actin"/>
</dbReference>
<dbReference type="InterPro" id="IPR043129">
    <property type="entry name" value="ATPase_NBD"/>
</dbReference>
<dbReference type="PANTHER" id="PTHR11937">
    <property type="entry name" value="ACTIN"/>
    <property type="match status" value="1"/>
</dbReference>
<dbReference type="Pfam" id="PF00022">
    <property type="entry name" value="Actin"/>
    <property type="match status" value="1"/>
</dbReference>
<dbReference type="PRINTS" id="PR00190">
    <property type="entry name" value="ACTIN"/>
</dbReference>
<dbReference type="SMART" id="SM00268">
    <property type="entry name" value="ACTIN"/>
    <property type="match status" value="1"/>
</dbReference>
<dbReference type="SUPFAM" id="SSF53067">
    <property type="entry name" value="Actin-like ATPase domain"/>
    <property type="match status" value="2"/>
</dbReference>
<evidence type="ECO:0000250" key="1">
    <source>
        <dbReference type="UniProtKB" id="Q8TDG2"/>
    </source>
</evidence>
<evidence type="ECO:0000305" key="2"/>
<keyword id="KW-0963">Cytoplasm</keyword>
<keyword id="KW-0968">Cytoplasmic vesicle</keyword>
<keyword id="KW-0206">Cytoskeleton</keyword>
<keyword id="KW-0539">Nucleus</keyword>
<keyword id="KW-1185">Reference proteome</keyword>
<keyword id="KW-0804">Transcription</keyword>
<keyword id="KW-0805">Transcription regulation</keyword>